<proteinExistence type="evidence at transcript level"/>
<sequence>MMRGAAPTGVVSVMVLMILVLLKQIESASANGSSLGLPPRKFCNIYQGSWVYDKSYPLYDSKNCPFIERQFNCKSNGRPDSEYLKYRWQPSGCNLPRFNGLDFLGRIMKGKKLMFVGDSLSLNQWQSLTCLLHNAAPKANSTSTRSPSGLSVFSFPAYNSSIMFSRNAFLVDIVGAPPKRVMKLDSISSGSLWKTADVLVFNSWHWWLHTDRKQPWDAIMSGNVTVKDMDRLVAYEKAMMTWAKWIDQNIDPSKTKVFFQGISPDHGRAREWSKQGGKGSCIGETKPIMGSSYLAGPHAAEMVVAKVIKTMKNQARLMDVTLMSQLRKDGHPSVYGFGGHRMADCSHWCLSGVPDSWNQLLYSELFHS</sequence>
<organism>
    <name type="scientific">Arabidopsis thaliana</name>
    <name type="common">Mouse-ear cress</name>
    <dbReference type="NCBI Taxonomy" id="3702"/>
    <lineage>
        <taxon>Eukaryota</taxon>
        <taxon>Viridiplantae</taxon>
        <taxon>Streptophyta</taxon>
        <taxon>Embryophyta</taxon>
        <taxon>Tracheophyta</taxon>
        <taxon>Spermatophyta</taxon>
        <taxon>Magnoliopsida</taxon>
        <taxon>eudicotyledons</taxon>
        <taxon>Gunneridae</taxon>
        <taxon>Pentapetalae</taxon>
        <taxon>rosids</taxon>
        <taxon>malvids</taxon>
        <taxon>Brassicales</taxon>
        <taxon>Brassicaceae</taxon>
        <taxon>Camelineae</taxon>
        <taxon>Arabidopsis</taxon>
    </lineage>
</organism>
<evidence type="ECO:0000250" key="1">
    <source>
        <dbReference type="UniProtKB" id="Q9FG35"/>
    </source>
</evidence>
<evidence type="ECO:0000250" key="2">
    <source>
        <dbReference type="UniProtKB" id="Q9LY46"/>
    </source>
</evidence>
<evidence type="ECO:0000255" key="3"/>
<evidence type="ECO:0000303" key="4">
    <source>
    </source>
</evidence>
<evidence type="ECO:0000305" key="5"/>
<evidence type="ECO:0000305" key="6">
    <source>
    </source>
</evidence>
<feature type="chain" id="PRO_0000425408" description="Protein trichome birefringence-like 43">
    <location>
        <begin position="1"/>
        <end position="368"/>
    </location>
</feature>
<feature type="transmembrane region" description="Helical; Signal-anchor for type II membrane protein" evidence="3">
    <location>
        <begin position="9"/>
        <end position="25"/>
    </location>
</feature>
<feature type="short sequence motif" description="GDS motif">
    <location>
        <begin position="117"/>
        <end position="119"/>
    </location>
</feature>
<feature type="short sequence motif" description="DCXHWCLPGXXDXWN motif">
    <location>
        <begin position="344"/>
        <end position="358"/>
    </location>
</feature>
<feature type="splice variant" id="VSP_053699" description="In isoform 2." evidence="4">
    <location>
        <begin position="216"/>
        <end position="368"/>
    </location>
</feature>
<feature type="sequence conflict" description="In Ref. 4; AAP22494/AAP22495." evidence="5" ref="4">
    <original>H</original>
    <variation>R</variation>
    <location>
        <position position="205"/>
    </location>
</feature>
<name>TBL43_ARATH</name>
<keyword id="KW-0025">Alternative splicing</keyword>
<keyword id="KW-0472">Membrane</keyword>
<keyword id="KW-1185">Reference proteome</keyword>
<keyword id="KW-0735">Signal-anchor</keyword>
<keyword id="KW-0812">Transmembrane</keyword>
<keyword id="KW-1133">Transmembrane helix</keyword>
<protein>
    <recommendedName>
        <fullName>Protein trichome birefringence-like 43</fullName>
    </recommendedName>
</protein>
<accession>Q6DR10</accession>
<accession>O80855</accession>
<accession>Q84N42</accession>
<accession>Q84N43</accession>
<gene>
    <name type="primary">TBL43</name>
    <name type="ordered locus">At2g30900</name>
    <name type="ORF">AT1G29050.1</name>
</gene>
<comment type="function">
    <text evidence="1 2">May act as a bridging protein that binds pectin and other cell wall polysaccharides. Probably involved in maintaining esterification of pectins (By similarity). May be involved in the specific O-acetylation of cell wall polymers (By similarity).</text>
</comment>
<comment type="subcellular location">
    <subcellularLocation>
        <location evidence="5">Membrane</location>
        <topology evidence="5">Single-pass type II membrane protein</topology>
    </subcellularLocation>
</comment>
<comment type="alternative products">
    <event type="alternative splicing"/>
    <isoform>
        <id>Q6DR10-1</id>
        <name>1</name>
        <sequence type="displayed"/>
    </isoform>
    <isoform>
        <id>Q6DR10-2</id>
        <name>2</name>
        <sequence type="described" ref="VSP_053699"/>
    </isoform>
</comment>
<comment type="miscellaneous">
    <text evidence="6">Contains 2 motifs that are conserved in esterases, but it is unlikely that this protein belongs to the catalytically active pectin esterases.</text>
</comment>
<comment type="similarity">
    <text evidence="5">Belongs to the PC-esterase family. TBL subfamily.</text>
</comment>
<comment type="sequence caution" evidence="5">
    <conflict type="erroneous initiation">
        <sequence resource="EMBL-CDS" id="AAC20724"/>
    </conflict>
    <text>Truncated N-terminus.</text>
</comment>
<comment type="sequence caution" evidence="5">
    <conflict type="erroneous initiation">
        <sequence resource="EMBL-CDS" id="AAP22495"/>
    </conflict>
    <text>Truncated N-terminus.</text>
</comment>
<dbReference type="EMBL" id="AC004669">
    <property type="protein sequence ID" value="AAC20724.1"/>
    <property type="status" value="ALT_INIT"/>
    <property type="molecule type" value="Genomic_DNA"/>
</dbReference>
<dbReference type="EMBL" id="CP002685">
    <property type="protein sequence ID" value="AEC08454.1"/>
    <property type="molecule type" value="Genomic_DNA"/>
</dbReference>
<dbReference type="EMBL" id="AY649305">
    <property type="protein sequence ID" value="AAT69222.1"/>
    <property type="molecule type" value="mRNA"/>
</dbReference>
<dbReference type="EMBL" id="AY262050">
    <property type="protein sequence ID" value="AAP22494.1"/>
    <property type="molecule type" value="mRNA"/>
</dbReference>
<dbReference type="EMBL" id="AY262051">
    <property type="protein sequence ID" value="AAP22495.1"/>
    <property type="status" value="ALT_INIT"/>
    <property type="molecule type" value="mRNA"/>
</dbReference>
<dbReference type="PIR" id="A84714">
    <property type="entry name" value="A84714"/>
</dbReference>
<dbReference type="RefSeq" id="NP_180647.2">
    <molecule id="Q6DR10-1"/>
    <property type="nucleotide sequence ID" value="NM_128642.2"/>
</dbReference>
<dbReference type="SMR" id="Q6DR10"/>
<dbReference type="FunCoup" id="Q6DR10">
    <property type="interactions" value="49"/>
</dbReference>
<dbReference type="STRING" id="3702.Q6DR10"/>
<dbReference type="iPTMnet" id="Q6DR10"/>
<dbReference type="PaxDb" id="3702-AT2G30900.1"/>
<dbReference type="ProteomicsDB" id="234136">
    <molecule id="Q6DR10-1"/>
</dbReference>
<dbReference type="EnsemblPlants" id="AT2G30900.1">
    <molecule id="Q6DR10-1"/>
    <property type="protein sequence ID" value="AT2G30900.1"/>
    <property type="gene ID" value="AT2G30900"/>
</dbReference>
<dbReference type="GeneID" id="817640"/>
<dbReference type="Gramene" id="AT2G30900.1">
    <molecule id="Q6DR10-1"/>
    <property type="protein sequence ID" value="AT2G30900.1"/>
    <property type="gene ID" value="AT2G30900"/>
</dbReference>
<dbReference type="KEGG" id="ath:AT2G30900"/>
<dbReference type="Araport" id="AT2G30900"/>
<dbReference type="TAIR" id="AT2G30900">
    <property type="gene designation" value="TBL43"/>
</dbReference>
<dbReference type="eggNOG" id="ENOG502QVJM">
    <property type="taxonomic scope" value="Eukaryota"/>
</dbReference>
<dbReference type="HOGENOM" id="CLU_020953_3_0_1"/>
<dbReference type="InParanoid" id="Q6DR10"/>
<dbReference type="OMA" id="YNVKVMF"/>
<dbReference type="PhylomeDB" id="Q6DR10"/>
<dbReference type="PRO" id="PR:Q6DR10"/>
<dbReference type="Proteomes" id="UP000006548">
    <property type="component" value="Chromosome 2"/>
</dbReference>
<dbReference type="ExpressionAtlas" id="Q6DR10">
    <property type="expression patterns" value="baseline and differential"/>
</dbReference>
<dbReference type="GO" id="GO:0005794">
    <property type="term" value="C:Golgi apparatus"/>
    <property type="evidence" value="ECO:0000318"/>
    <property type="project" value="GO_Central"/>
</dbReference>
<dbReference type="GO" id="GO:0016020">
    <property type="term" value="C:membrane"/>
    <property type="evidence" value="ECO:0007669"/>
    <property type="project" value="UniProtKB-SubCell"/>
</dbReference>
<dbReference type="GO" id="GO:0016413">
    <property type="term" value="F:O-acetyltransferase activity"/>
    <property type="evidence" value="ECO:0000318"/>
    <property type="project" value="GO_Central"/>
</dbReference>
<dbReference type="InterPro" id="IPR029962">
    <property type="entry name" value="TBL"/>
</dbReference>
<dbReference type="InterPro" id="IPR026057">
    <property type="entry name" value="TBL_C"/>
</dbReference>
<dbReference type="InterPro" id="IPR025846">
    <property type="entry name" value="TBL_N"/>
</dbReference>
<dbReference type="PANTHER" id="PTHR32285:SF350">
    <property type="entry name" value="PROTEIN TRICHOME BIREFRINGENCE-LIKE 43"/>
    <property type="match status" value="1"/>
</dbReference>
<dbReference type="PANTHER" id="PTHR32285">
    <property type="entry name" value="PROTEIN TRICHOME BIREFRINGENCE-LIKE 9-RELATED"/>
    <property type="match status" value="1"/>
</dbReference>
<dbReference type="Pfam" id="PF13839">
    <property type="entry name" value="PC-Esterase"/>
    <property type="match status" value="1"/>
</dbReference>
<dbReference type="Pfam" id="PF14416">
    <property type="entry name" value="PMR5N"/>
    <property type="match status" value="1"/>
</dbReference>
<reference key="1">
    <citation type="journal article" date="1999" name="Nature">
        <title>Sequence and analysis of chromosome 2 of the plant Arabidopsis thaliana.</title>
        <authorList>
            <person name="Lin X."/>
            <person name="Kaul S."/>
            <person name="Rounsley S.D."/>
            <person name="Shea T.P."/>
            <person name="Benito M.-I."/>
            <person name="Town C.D."/>
            <person name="Fujii C.Y."/>
            <person name="Mason T.M."/>
            <person name="Bowman C.L."/>
            <person name="Barnstead M.E."/>
            <person name="Feldblyum T.V."/>
            <person name="Buell C.R."/>
            <person name="Ketchum K.A."/>
            <person name="Lee J.J."/>
            <person name="Ronning C.M."/>
            <person name="Koo H.L."/>
            <person name="Moffat K.S."/>
            <person name="Cronin L.A."/>
            <person name="Shen M."/>
            <person name="Pai G."/>
            <person name="Van Aken S."/>
            <person name="Umayam L."/>
            <person name="Tallon L.J."/>
            <person name="Gill J.E."/>
            <person name="Adams M.D."/>
            <person name="Carrera A.J."/>
            <person name="Creasy T.H."/>
            <person name="Goodman H.M."/>
            <person name="Somerville C.R."/>
            <person name="Copenhaver G.P."/>
            <person name="Preuss D."/>
            <person name="Nierman W.C."/>
            <person name="White O."/>
            <person name="Eisen J.A."/>
            <person name="Salzberg S.L."/>
            <person name="Fraser C.M."/>
            <person name="Venter J.C."/>
        </authorList>
    </citation>
    <scope>NUCLEOTIDE SEQUENCE [LARGE SCALE GENOMIC DNA]</scope>
    <source>
        <strain>cv. Columbia</strain>
    </source>
</reference>
<reference key="2">
    <citation type="journal article" date="2017" name="Plant J.">
        <title>Araport11: a complete reannotation of the Arabidopsis thaliana reference genome.</title>
        <authorList>
            <person name="Cheng C.Y."/>
            <person name="Krishnakumar V."/>
            <person name="Chan A.P."/>
            <person name="Thibaud-Nissen F."/>
            <person name="Schobel S."/>
            <person name="Town C.D."/>
        </authorList>
    </citation>
    <scope>GENOME REANNOTATION</scope>
    <source>
        <strain>cv. Columbia</strain>
    </source>
</reference>
<reference key="3">
    <citation type="submission" date="2004-06" db="EMBL/GenBank/DDBJ databases">
        <authorList>
            <person name="Underwood B.A."/>
            <person name="Xiao Y.-L."/>
            <person name="Moskal W.A. Jr."/>
            <person name="Monaghan E.L."/>
            <person name="Wang W."/>
            <person name="Redman J.C."/>
            <person name="Wu H.C."/>
            <person name="Utterback T."/>
            <person name="Town C.D."/>
        </authorList>
    </citation>
    <scope>NUCLEOTIDE SEQUENCE [LARGE SCALE MRNA] (ISOFORM 1)</scope>
    <source>
        <strain>cv. Columbia</strain>
    </source>
</reference>
<reference key="4">
    <citation type="journal article" date="2005" name="Plant Physiol.">
        <title>Analysis of the cDNAs of hypothetical genes on Arabidopsis chromosome 2 reveals numerous transcript variants.</title>
        <authorList>
            <person name="Xiao Y.-L."/>
            <person name="Smith S.R."/>
            <person name="Ishmael N."/>
            <person name="Redman J.C."/>
            <person name="Kumar N."/>
            <person name="Monaghan E.L."/>
            <person name="Ayele M."/>
            <person name="Haas B.J."/>
            <person name="Wu H.C."/>
            <person name="Town C.D."/>
        </authorList>
    </citation>
    <scope>NUCLEOTIDE SEQUENCE [LARGE SCALE MRNA] (ISOFORMS 1 AND 2)</scope>
    <source>
        <strain>cv. Columbia</strain>
    </source>
</reference>
<reference key="5">
    <citation type="journal article" date="2007" name="Plant J.">
        <title>Arabidopsis ESK1 encodes a novel regulator of freezing tolerance.</title>
        <authorList>
            <person name="Xin Z."/>
            <person name="Mandaokar A."/>
            <person name="Chen J."/>
            <person name="Last R.L."/>
            <person name="Browse J."/>
        </authorList>
    </citation>
    <scope>GENE FAMILY</scope>
    <source>
        <strain>cv. Columbia</strain>
    </source>
</reference>
<reference key="6">
    <citation type="journal article" date="2010" name="Plant Physiol.">
        <title>TRICHOME BIREFRINGENCE and its homolog AT5G01360 encode plant-specific DUF231 proteins required for cellulose biosynthesis in Arabidopsis.</title>
        <authorList>
            <person name="Bischoff V."/>
            <person name="Nita S."/>
            <person name="Neumetzler L."/>
            <person name="Schindelasch D."/>
            <person name="Urbain A."/>
            <person name="Eshed R."/>
            <person name="Persson S."/>
            <person name="Delmer D."/>
            <person name="Scheible W.R."/>
        </authorList>
    </citation>
    <scope>GENE FAMILY</scope>
    <scope>NOMENCLATURE</scope>
</reference>
<reference key="7">
    <citation type="journal article" date="2010" name="Plant Signal. Behav.">
        <title>Involvement of TBL/DUF231 proteins into cell wall biology.</title>
        <authorList>
            <person name="Bischoff V."/>
            <person name="Selbig J."/>
            <person name="Scheible W.R."/>
        </authorList>
    </citation>
    <scope>3D-STRUCTURE MODELING</scope>
</reference>